<comment type="function">
    <text evidence="2">Component of the large ribosomal subunit. The ribosome is a large ribonucleoprotein complex responsible for the synthesis of proteins in the cell.</text>
</comment>
<comment type="subunit">
    <text evidence="2">Component of the large ribosomal subunit.</text>
</comment>
<comment type="subcellular location">
    <subcellularLocation>
        <location evidence="2">Cytoplasm</location>
    </subcellularLocation>
</comment>
<comment type="similarity">
    <text evidence="3">Belongs to the eukaryotic ribosomal protein eL15 family.</text>
</comment>
<protein>
    <recommendedName>
        <fullName evidence="3">Large ribosomal subunit protein eL15</fullName>
    </recommendedName>
    <alternativeName>
        <fullName>60S ribosomal protein L15</fullName>
    </alternativeName>
</protein>
<reference key="1">
    <citation type="submission" date="2004-03" db="EMBL/GenBank/DDBJ databases">
        <title>Molecular cloning and sequence analysis of two piscine ribosomal protein L15 cDNAs.</title>
        <authorList>
            <person name="Zhang J."/>
            <person name="Song P."/>
        </authorList>
    </citation>
    <scope>NUCLEOTIDE SEQUENCE [MRNA]</scope>
    <source>
        <tissue>Liver</tissue>
    </source>
</reference>
<keyword id="KW-0963">Cytoplasm</keyword>
<keyword id="KW-0687">Ribonucleoprotein</keyword>
<keyword id="KW-0689">Ribosomal protein</keyword>
<proteinExistence type="evidence at transcript level"/>
<feature type="initiator methionine" description="Removed" evidence="1">
    <location>
        <position position="1"/>
    </location>
</feature>
<feature type="chain" id="PRO_0000127546" description="Large ribosomal subunit protein eL15">
    <location>
        <begin position="2"/>
        <end position="204"/>
    </location>
</feature>
<organism>
    <name type="scientific">Silurus asotus</name>
    <name type="common">Amur catfish</name>
    <name type="synonym">Parasilurus asotus</name>
    <dbReference type="NCBI Taxonomy" id="30991"/>
    <lineage>
        <taxon>Eukaryota</taxon>
        <taxon>Metazoa</taxon>
        <taxon>Chordata</taxon>
        <taxon>Craniata</taxon>
        <taxon>Vertebrata</taxon>
        <taxon>Euteleostomi</taxon>
        <taxon>Actinopterygii</taxon>
        <taxon>Neopterygii</taxon>
        <taxon>Teleostei</taxon>
        <taxon>Ostariophysi</taxon>
        <taxon>Siluriformes</taxon>
        <taxon>Siluridae</taxon>
        <taxon>Silurus</taxon>
    </lineage>
</organism>
<name>RL15_SILAS</name>
<dbReference type="EMBL" id="AY563554">
    <property type="protein sequence ID" value="AAS72413.1"/>
    <property type="molecule type" value="mRNA"/>
</dbReference>
<dbReference type="SMR" id="P61369"/>
<dbReference type="GO" id="GO:0022625">
    <property type="term" value="C:cytosolic large ribosomal subunit"/>
    <property type="evidence" value="ECO:0007669"/>
    <property type="project" value="TreeGrafter"/>
</dbReference>
<dbReference type="GO" id="GO:0003723">
    <property type="term" value="F:RNA binding"/>
    <property type="evidence" value="ECO:0007669"/>
    <property type="project" value="TreeGrafter"/>
</dbReference>
<dbReference type="GO" id="GO:0003735">
    <property type="term" value="F:structural constituent of ribosome"/>
    <property type="evidence" value="ECO:0007669"/>
    <property type="project" value="InterPro"/>
</dbReference>
<dbReference type="GO" id="GO:0002181">
    <property type="term" value="P:cytoplasmic translation"/>
    <property type="evidence" value="ECO:0007669"/>
    <property type="project" value="TreeGrafter"/>
</dbReference>
<dbReference type="FunFam" id="3.40.1120.10:FF:000001">
    <property type="entry name" value="Ribosomal protein L15"/>
    <property type="match status" value="1"/>
</dbReference>
<dbReference type="Gene3D" id="3.40.1120.10">
    <property type="entry name" value="Ribosomal protein l15e"/>
    <property type="match status" value="1"/>
</dbReference>
<dbReference type="InterPro" id="IPR024794">
    <property type="entry name" value="Rbsml_eL15_core_dom_sf"/>
</dbReference>
<dbReference type="InterPro" id="IPR000439">
    <property type="entry name" value="Ribosomal_eL15"/>
</dbReference>
<dbReference type="InterPro" id="IPR020925">
    <property type="entry name" value="Ribosomal_eL15_CS"/>
</dbReference>
<dbReference type="InterPro" id="IPR012678">
    <property type="entry name" value="Ribosomal_uL23/eL15/eS24_sf"/>
</dbReference>
<dbReference type="NCBIfam" id="NF003269">
    <property type="entry name" value="PRK04243.1"/>
    <property type="match status" value="1"/>
</dbReference>
<dbReference type="PANTHER" id="PTHR11847:SF4">
    <property type="entry name" value="LARGE RIBOSOMAL SUBUNIT PROTEIN EL15"/>
    <property type="match status" value="1"/>
</dbReference>
<dbReference type="PANTHER" id="PTHR11847">
    <property type="entry name" value="RIBOSOMAL PROTEIN L15"/>
    <property type="match status" value="1"/>
</dbReference>
<dbReference type="Pfam" id="PF00827">
    <property type="entry name" value="Ribosomal_L15e"/>
    <property type="match status" value="1"/>
</dbReference>
<dbReference type="SMART" id="SM01384">
    <property type="entry name" value="Ribosomal_L15e"/>
    <property type="match status" value="1"/>
</dbReference>
<dbReference type="SUPFAM" id="SSF54189">
    <property type="entry name" value="Ribosomal proteins S24e, L23 and L15e"/>
    <property type="match status" value="1"/>
</dbReference>
<dbReference type="PROSITE" id="PS01194">
    <property type="entry name" value="RIBOSOMAL_L15E"/>
    <property type="match status" value="1"/>
</dbReference>
<accession>P61369</accession>
<evidence type="ECO:0000250" key="1"/>
<evidence type="ECO:0000250" key="2">
    <source>
        <dbReference type="UniProtKB" id="P61313"/>
    </source>
</evidence>
<evidence type="ECO:0000305" key="3"/>
<gene>
    <name type="primary">rpl15</name>
</gene>
<sequence length="204" mass="24080">MGAYKYMQELWRKKQSDVMRFLLRVRCWQYRQLSALHRAPRATRPDKARRLGYKAKQGYVIYRVRVRRGGRKRPVPKGATYGKPVHHGVNQLKFARSLQSIAEERAGRHCGGLRVLNSYWVGEDSTYKFFEVILIDTFHKAIRRNPDMQWITKAVHKHREMRGLTSAGKKSRGLGKGHKFHLTIGGSRRAAWRRRNTLQLHRYR</sequence>